<name>CR032_ESOLU</name>
<organism>
    <name type="scientific">Esox lucius</name>
    <name type="common">Northern pike</name>
    <dbReference type="NCBI Taxonomy" id="8010"/>
    <lineage>
        <taxon>Eukaryota</taxon>
        <taxon>Metazoa</taxon>
        <taxon>Chordata</taxon>
        <taxon>Craniata</taxon>
        <taxon>Vertebrata</taxon>
        <taxon>Euteleostomi</taxon>
        <taxon>Actinopterygii</taxon>
        <taxon>Neopterygii</taxon>
        <taxon>Teleostei</taxon>
        <taxon>Protacanthopterygii</taxon>
        <taxon>Esociformes</taxon>
        <taxon>Esocidae</taxon>
        <taxon>Esox</taxon>
    </lineage>
</organism>
<reference key="1">
    <citation type="journal article" date="2010" name="BMC Genomics">
        <title>Salmo salar and Esox lucius full-length cDNA sequences reveal changes in evolutionary pressures on a post-tetraploidization genome.</title>
        <authorList>
            <person name="Leong J.S."/>
            <person name="Jantzen S.G."/>
            <person name="von Schalburg K.R."/>
            <person name="Cooper G.A."/>
            <person name="Messmer A.M."/>
            <person name="Liao N.Y."/>
            <person name="Munro S."/>
            <person name="Moore R."/>
            <person name="Holt R.A."/>
            <person name="Jones S.J."/>
            <person name="Davidson W.S."/>
            <person name="Koop B.F."/>
        </authorList>
    </citation>
    <scope>NUCLEOTIDE SEQUENCE [LARGE SCALE MRNA]</scope>
    <source>
        <tissue>Kidney</tissue>
    </source>
</reference>
<dbReference type="EMBL" id="BT079517">
    <property type="protein sequence ID" value="ACO13941.1"/>
    <property type="molecule type" value="mRNA"/>
</dbReference>
<dbReference type="EMBL" id="BT080098">
    <property type="protein sequence ID" value="ACO14522.1"/>
    <property type="molecule type" value="mRNA"/>
</dbReference>
<dbReference type="RefSeq" id="XP_010891103.1">
    <property type="nucleotide sequence ID" value="XM_010892801.2"/>
</dbReference>
<dbReference type="RefSeq" id="XP_010891104.1">
    <property type="nucleotide sequence ID" value="XM_010892802.2"/>
</dbReference>
<dbReference type="FunCoup" id="C1BY38">
    <property type="interactions" value="279"/>
</dbReference>
<dbReference type="STRING" id="8010.ENSELUP00000031009"/>
<dbReference type="GeneID" id="105023529"/>
<dbReference type="KEGG" id="els:105023529"/>
<dbReference type="InParanoid" id="C1BY38"/>
<dbReference type="OMA" id="PIINTFW"/>
<dbReference type="OrthoDB" id="10062823at2759"/>
<dbReference type="Proteomes" id="UP000265140">
    <property type="component" value="Chromosome 14"/>
</dbReference>
<dbReference type="Bgee" id="ENSELUG00000008514">
    <property type="expression patterns" value="Expressed in ovary and 14 other cell types or tissues"/>
</dbReference>
<dbReference type="InterPro" id="IPR026776">
    <property type="entry name" value="UPF0729_C18orf32-like"/>
</dbReference>
<dbReference type="PANTHER" id="PTHR13456">
    <property type="entry name" value="UPF0729 PROTEIN C18ORF32"/>
    <property type="match status" value="1"/>
</dbReference>
<dbReference type="PANTHER" id="PTHR13456:SF0">
    <property type="entry name" value="UPF0729 PROTEIN C18ORF32"/>
    <property type="match status" value="1"/>
</dbReference>
<dbReference type="Pfam" id="PF14975">
    <property type="entry name" value="DUF4512"/>
    <property type="match status" value="1"/>
</dbReference>
<sequence length="87" mass="9385">MVCIPCIVIPVLLWVYKRFLEPIIYPFIGPIISRFWPTNIAVQENGTGDVKASEKSNGACKTKADVVVANGPSANGPATPISDKKID</sequence>
<accession>C1BY38</accession>
<evidence type="ECO:0000305" key="1"/>
<keyword id="KW-1185">Reference proteome</keyword>
<feature type="chain" id="PRO_0000390358" description="UPF0729 protein C18orf32 homolog">
    <location>
        <begin position="1"/>
        <end position="87"/>
    </location>
</feature>
<comment type="similarity">
    <text evidence="1">Belongs to the UPF0729 family.</text>
</comment>
<protein>
    <recommendedName>
        <fullName>UPF0729 protein C18orf32 homolog</fullName>
    </recommendedName>
</protein>
<proteinExistence type="inferred from homology"/>